<name>ISCR_ECOUT</name>
<accession>Q1R8K1</accession>
<proteinExistence type="inferred from homology"/>
<comment type="function">
    <text evidence="1">Regulates the transcription of several operons and genes involved in the biogenesis of Fe-S clusters and Fe-S-containing proteins.</text>
</comment>
<comment type="cofactor">
    <cofactor evidence="1">
        <name>[2Fe-2S] cluster</name>
        <dbReference type="ChEBI" id="CHEBI:190135"/>
    </cofactor>
    <text evidence="1">Binds 1 [2Fe-2S] cluster.</text>
</comment>
<dbReference type="EMBL" id="CP000243">
    <property type="protein sequence ID" value="ABE08313.1"/>
    <property type="molecule type" value="Genomic_DNA"/>
</dbReference>
<dbReference type="RefSeq" id="WP_001241357.1">
    <property type="nucleotide sequence ID" value="NZ_CP064825.1"/>
</dbReference>
<dbReference type="SMR" id="Q1R8K1"/>
<dbReference type="GeneID" id="86947421"/>
<dbReference type="KEGG" id="eci:UTI89_C2853"/>
<dbReference type="HOGENOM" id="CLU_107144_0_0_6"/>
<dbReference type="Proteomes" id="UP000001952">
    <property type="component" value="Chromosome"/>
</dbReference>
<dbReference type="GO" id="GO:0005829">
    <property type="term" value="C:cytosol"/>
    <property type="evidence" value="ECO:0007669"/>
    <property type="project" value="TreeGrafter"/>
</dbReference>
<dbReference type="GO" id="GO:0051537">
    <property type="term" value="F:2 iron, 2 sulfur cluster binding"/>
    <property type="evidence" value="ECO:0007669"/>
    <property type="project" value="UniProtKB-KW"/>
</dbReference>
<dbReference type="GO" id="GO:0003700">
    <property type="term" value="F:DNA-binding transcription factor activity"/>
    <property type="evidence" value="ECO:0007669"/>
    <property type="project" value="UniProtKB-UniRule"/>
</dbReference>
<dbReference type="GO" id="GO:0003690">
    <property type="term" value="F:double-stranded DNA binding"/>
    <property type="evidence" value="ECO:0007669"/>
    <property type="project" value="UniProtKB-UniRule"/>
</dbReference>
<dbReference type="GO" id="GO:0005506">
    <property type="term" value="F:iron ion binding"/>
    <property type="evidence" value="ECO:0007669"/>
    <property type="project" value="UniProtKB-UniRule"/>
</dbReference>
<dbReference type="FunFam" id="1.10.10.10:FF:000026">
    <property type="entry name" value="HTH-type transcriptional regulator IscR"/>
    <property type="match status" value="1"/>
</dbReference>
<dbReference type="Gene3D" id="1.10.10.10">
    <property type="entry name" value="Winged helix-like DNA-binding domain superfamily/Winged helix DNA-binding domain"/>
    <property type="match status" value="1"/>
</dbReference>
<dbReference type="HAMAP" id="MF_01176">
    <property type="entry name" value="HTH_type_IscR"/>
    <property type="match status" value="1"/>
</dbReference>
<dbReference type="InterPro" id="IPR010242">
    <property type="entry name" value="TF_HTH_IscR"/>
</dbReference>
<dbReference type="InterPro" id="IPR030489">
    <property type="entry name" value="TR_Rrf2-type_CS"/>
</dbReference>
<dbReference type="InterPro" id="IPR000944">
    <property type="entry name" value="Tscrpt_reg_Rrf2"/>
</dbReference>
<dbReference type="InterPro" id="IPR036388">
    <property type="entry name" value="WH-like_DNA-bd_sf"/>
</dbReference>
<dbReference type="InterPro" id="IPR036390">
    <property type="entry name" value="WH_DNA-bd_sf"/>
</dbReference>
<dbReference type="NCBIfam" id="TIGR02010">
    <property type="entry name" value="IscR"/>
    <property type="match status" value="1"/>
</dbReference>
<dbReference type="NCBIfam" id="NF008110">
    <property type="entry name" value="PRK10857.1"/>
    <property type="match status" value="1"/>
</dbReference>
<dbReference type="NCBIfam" id="TIGR00738">
    <property type="entry name" value="rrf2_super"/>
    <property type="match status" value="1"/>
</dbReference>
<dbReference type="PANTHER" id="PTHR33221:SF5">
    <property type="entry name" value="HTH-TYPE TRANSCRIPTIONAL REGULATOR ISCR"/>
    <property type="match status" value="1"/>
</dbReference>
<dbReference type="PANTHER" id="PTHR33221">
    <property type="entry name" value="WINGED HELIX-TURN-HELIX TRANSCRIPTIONAL REGULATOR, RRF2 FAMILY"/>
    <property type="match status" value="1"/>
</dbReference>
<dbReference type="Pfam" id="PF02082">
    <property type="entry name" value="Rrf2"/>
    <property type="match status" value="1"/>
</dbReference>
<dbReference type="SUPFAM" id="SSF46785">
    <property type="entry name" value="Winged helix' DNA-binding domain"/>
    <property type="match status" value="1"/>
</dbReference>
<dbReference type="PROSITE" id="PS01332">
    <property type="entry name" value="HTH_RRF2_1"/>
    <property type="match status" value="1"/>
</dbReference>
<dbReference type="PROSITE" id="PS51197">
    <property type="entry name" value="HTH_RRF2_2"/>
    <property type="match status" value="1"/>
</dbReference>
<keyword id="KW-0001">2Fe-2S</keyword>
<keyword id="KW-0010">Activator</keyword>
<keyword id="KW-0238">DNA-binding</keyword>
<keyword id="KW-0408">Iron</keyword>
<keyword id="KW-0411">Iron-sulfur</keyword>
<keyword id="KW-0479">Metal-binding</keyword>
<keyword id="KW-0678">Repressor</keyword>
<keyword id="KW-0804">Transcription</keyword>
<keyword id="KW-0805">Transcription regulation</keyword>
<reference key="1">
    <citation type="journal article" date="2006" name="Proc. Natl. Acad. Sci. U.S.A.">
        <title>Identification of genes subject to positive selection in uropathogenic strains of Escherichia coli: a comparative genomics approach.</title>
        <authorList>
            <person name="Chen S.L."/>
            <person name="Hung C.-S."/>
            <person name="Xu J."/>
            <person name="Reigstad C.S."/>
            <person name="Magrini V."/>
            <person name="Sabo A."/>
            <person name="Blasiar D."/>
            <person name="Bieri T."/>
            <person name="Meyer R.R."/>
            <person name="Ozersky P."/>
            <person name="Armstrong J.R."/>
            <person name="Fulton R.S."/>
            <person name="Latreille J.P."/>
            <person name="Spieth J."/>
            <person name="Hooton T.M."/>
            <person name="Mardis E.R."/>
            <person name="Hultgren S.J."/>
            <person name="Gordon J.I."/>
        </authorList>
    </citation>
    <scope>NUCLEOTIDE SEQUENCE [LARGE SCALE GENOMIC DNA]</scope>
    <source>
        <strain>UTI89 / UPEC</strain>
    </source>
</reference>
<protein>
    <recommendedName>
        <fullName evidence="1">HTH-type transcriptional regulator IscR</fullName>
    </recommendedName>
</protein>
<evidence type="ECO:0000255" key="1">
    <source>
        <dbReference type="HAMAP-Rule" id="MF_01176"/>
    </source>
</evidence>
<evidence type="ECO:0000256" key="2">
    <source>
        <dbReference type="SAM" id="MobiDB-lite"/>
    </source>
</evidence>
<gene>
    <name evidence="1" type="primary">iscR</name>
    <name type="ordered locus">UTI89_C2853</name>
</gene>
<sequence length="162" mass="17337">MRLTSKGRYAVTAMLDVALNSEAGPVPLADISERQGISLSYLEQLFSRLRKNGLVSSVRGPGGGYLLGKDASSIAVGEVISAVDESVDATRCQGKGGCQGGDKCLTHALWRDLSDRLTGFLNNITLGELVNNQEVLDVSGRQHTHDAPRTRTQDAIDVKLRA</sequence>
<feature type="chain" id="PRO_0000268918" description="HTH-type transcriptional regulator IscR">
    <location>
        <begin position="1"/>
        <end position="162"/>
    </location>
</feature>
<feature type="domain" description="HTH rrf2-type" evidence="1">
    <location>
        <begin position="2"/>
        <end position="131"/>
    </location>
</feature>
<feature type="DNA-binding region" description="H-T-H motif" evidence="1">
    <location>
        <begin position="28"/>
        <end position="51"/>
    </location>
</feature>
<feature type="region of interest" description="Disordered" evidence="2">
    <location>
        <begin position="140"/>
        <end position="162"/>
    </location>
</feature>
<feature type="compositionally biased region" description="Basic and acidic residues" evidence="2">
    <location>
        <begin position="143"/>
        <end position="162"/>
    </location>
</feature>
<feature type="binding site" evidence="1">
    <location>
        <position position="92"/>
    </location>
    <ligand>
        <name>[2Fe-2S] cluster</name>
        <dbReference type="ChEBI" id="CHEBI:190135"/>
    </ligand>
</feature>
<feature type="binding site" evidence="1">
    <location>
        <position position="98"/>
    </location>
    <ligand>
        <name>[2Fe-2S] cluster</name>
        <dbReference type="ChEBI" id="CHEBI:190135"/>
    </ligand>
</feature>
<feature type="binding site" evidence="1">
    <location>
        <position position="104"/>
    </location>
    <ligand>
        <name>[2Fe-2S] cluster</name>
        <dbReference type="ChEBI" id="CHEBI:190135"/>
    </ligand>
</feature>
<organism>
    <name type="scientific">Escherichia coli (strain UTI89 / UPEC)</name>
    <dbReference type="NCBI Taxonomy" id="364106"/>
    <lineage>
        <taxon>Bacteria</taxon>
        <taxon>Pseudomonadati</taxon>
        <taxon>Pseudomonadota</taxon>
        <taxon>Gammaproteobacteria</taxon>
        <taxon>Enterobacterales</taxon>
        <taxon>Enterobacteriaceae</taxon>
        <taxon>Escherichia</taxon>
    </lineage>
</organism>